<comment type="function">
    <text evidence="2 5 6">Serine/threonine-protein phosphatase component of macronutrients metabolism. Forms a functional kinase and phosphatase pair with BCKDK, serving as a metabolic regulatory node that coordinates branched-chain amino acids (BCAAs) with glucose and lipid metabolism via two distinct phosphoprotein targets: mitochondrial BCKDHA subunit of the branched-chain alpha-ketoacid dehydrogenase (BCKDH) complex and cytosolic ACLY, a lipogenic enzyme of Krebs cycle (By similarity). At high levels of branched-chain ketoacids, dephosphorylates and activates mitochondrial BCKDH complex, a multisubunit complex consisting of three multimeric components each involved in different steps of BCAA catabolism: E1 composed of BCKDHA and BCKDHB, E2 core composed of DBT monomers, and E3 composed of DLD monomers. Tightly associates with the E2 component of BCKDH complex and dephosphorylates BCKDHA on Ser-334 (By similarity). Regulates the reversible phosphorylation of ACLY in response to changes in cellular carbohydrate abundance such as occurs during fasting to feeding metabolic transition. At fasting state, appears to dephosphorylate ACLY on Ser-455 and inactivate it. Refeeding stimulates MLXIPL/ChREBP transcription factor, leading to increased BCKDK to PPM1K expression ratio, phosphorylation and activation of ACLY that ultimately results in the generation of malonyl-CoA and oxaloacetate immediate substrates of de novo lipogenesis and gluconeogenesis, respectively (By similarity). Recognizes phosphosites having SxS or RxxS motifs and strictly depends on Mn(2+) ions for the phosphatase activity (By similarity). Regulates Ca(2+)-induced opening of mitochondrial transition pore and apoptotic cell death (By similarity) (PubMed:17374715, PubMed:19411760).</text>
</comment>
<comment type="catalytic activity">
    <reaction evidence="2">
        <text>O-phospho-L-seryl-[3-methyl-2-oxobutanoate dehydrogenase] + H2O = L-seryl-[3-methyl-2-oxobutanoate dehydrogenase] + phosphate</text>
        <dbReference type="Rhea" id="RHEA:77247"/>
        <dbReference type="Rhea" id="RHEA-COMP:13695"/>
        <dbReference type="Rhea" id="RHEA-COMP:13696"/>
        <dbReference type="ChEBI" id="CHEBI:15377"/>
        <dbReference type="ChEBI" id="CHEBI:29999"/>
        <dbReference type="ChEBI" id="CHEBI:43474"/>
        <dbReference type="ChEBI" id="CHEBI:83421"/>
        <dbReference type="EC" id="3.1.3.52"/>
    </reaction>
    <physiologicalReaction direction="left-to-right" evidence="2">
        <dbReference type="Rhea" id="RHEA:77248"/>
    </physiologicalReaction>
</comment>
<comment type="catalytic activity">
    <reaction evidence="6">
        <text>O-phospho-L-seryl-[protein] + H2O = L-seryl-[protein] + phosphate</text>
        <dbReference type="Rhea" id="RHEA:20629"/>
        <dbReference type="Rhea" id="RHEA-COMP:9863"/>
        <dbReference type="Rhea" id="RHEA-COMP:11604"/>
        <dbReference type="ChEBI" id="CHEBI:15377"/>
        <dbReference type="ChEBI" id="CHEBI:29999"/>
        <dbReference type="ChEBI" id="CHEBI:43474"/>
        <dbReference type="ChEBI" id="CHEBI:83421"/>
        <dbReference type="EC" id="3.1.3.16"/>
    </reaction>
    <physiologicalReaction direction="left-to-right" evidence="6">
        <dbReference type="Rhea" id="RHEA:20630"/>
    </physiologicalReaction>
</comment>
<comment type="cofactor">
    <cofactor evidence="2">
        <name>Mn(2+)</name>
        <dbReference type="ChEBI" id="CHEBI:29035"/>
    </cofactor>
    <text evidence="2">Binds 2 Mn(2+) ions per subunit.</text>
</comment>
<comment type="pathway">
    <text evidence="2">Protein modification.</text>
</comment>
<comment type="subunit">
    <text evidence="2">Monomer. Interacts with E1 and E2 components of the branched-chain alpha-ketoacid dehydrogenase (BCKDH) complex; this interaction requires colocalization in mitochondria. Interacts with BCKDHA but not with BCKDHB of the E1 component. Interacts with the 24-meric E2 core composed of DBT monomers with a 24:1 stoichiometry; the N-terminal region (residues 49-61) of PPM1K and C-terminal linker of the lipoyl domain of DBT (residues 145-160) are critical for this interaction, whereas the lipoyl prosthetic group is dispensable. Competes with BCKDK for binding to the E2 core; this interaction is modulated by branched-chain alpha-keto acids. At steady state, BCKDH holoenzyme preferentially binds BCKDK and BCKDHA is phosphorylated. In response to high levels of branched-chain alpha-keto acids, the inhibitory BCKDK is replaced by activating PPM1K leading to BCKDHA dephosphorylation and BCAA degradation.</text>
</comment>
<comment type="subcellular location">
    <subcellularLocation>
        <location evidence="2">Mitochondrion matrix</location>
    </subcellularLocation>
    <text evidence="1">Detected in the cytosolic compartment of liver cells.</text>
</comment>
<comment type="tissue specificity">
    <text evidence="4 5 6 7">Highly expressed in the heart, kidney, brain and liver and to a lesser extent in testis, lung, spleen and adipose tissue. Very low amount in muscle (at protein level). Also expressed in the thymus (at protein level) and the diaphragm. Significantly reduced in hypertrophied hearts.</text>
</comment>
<comment type="developmental stage">
    <text evidence="7">In the developing embryos detected in heart and brain structures as early as 10.5 dpc and in liver at 14.5 dpc.</text>
</comment>
<comment type="induction">
    <text evidence="7">Transcriptionally regulated by nutrient level of BCAAs.</text>
</comment>
<comment type="disruption phenotype">
    <text evidence="6">Mice are born at the expected Mendelian ratio and display no developmental abnormalities if fed normal diet. However high-protein diet, either during pregnancy or during the postnatal period, results in increased plasma BCAA levels and premature mortality in neonates.</text>
</comment>
<comment type="similarity">
    <text evidence="9">Belongs to the PP2C family.</text>
</comment>
<organism>
    <name type="scientific">Mus musculus</name>
    <name type="common">Mouse</name>
    <dbReference type="NCBI Taxonomy" id="10090"/>
    <lineage>
        <taxon>Eukaryota</taxon>
        <taxon>Metazoa</taxon>
        <taxon>Chordata</taxon>
        <taxon>Craniata</taxon>
        <taxon>Vertebrata</taxon>
        <taxon>Euteleostomi</taxon>
        <taxon>Mammalia</taxon>
        <taxon>Eutheria</taxon>
        <taxon>Euarchontoglires</taxon>
        <taxon>Glires</taxon>
        <taxon>Rodentia</taxon>
        <taxon>Myomorpha</taxon>
        <taxon>Muroidea</taxon>
        <taxon>Muridae</taxon>
        <taxon>Murinae</taxon>
        <taxon>Mus</taxon>
        <taxon>Mus</taxon>
    </lineage>
</organism>
<gene>
    <name evidence="8 10" type="primary">Ppm1k</name>
    <name evidence="8" type="synonym">Pp2cm</name>
</gene>
<evidence type="ECO:0000250" key="1">
    <source>
        <dbReference type="UniProtKB" id="A6K136"/>
    </source>
</evidence>
<evidence type="ECO:0000250" key="2">
    <source>
        <dbReference type="UniProtKB" id="Q8N3J5"/>
    </source>
</evidence>
<evidence type="ECO:0000255" key="3">
    <source>
        <dbReference type="PROSITE-ProRule" id="PRU01082"/>
    </source>
</evidence>
<evidence type="ECO:0000269" key="4">
    <source>
    </source>
</evidence>
<evidence type="ECO:0000269" key="5">
    <source>
    </source>
</evidence>
<evidence type="ECO:0000269" key="6">
    <source>
    </source>
</evidence>
<evidence type="ECO:0000269" key="7">
    <source>
    </source>
</evidence>
<evidence type="ECO:0000303" key="8">
    <source>
    </source>
</evidence>
<evidence type="ECO:0000305" key="9"/>
<evidence type="ECO:0000312" key="10">
    <source>
        <dbReference type="MGI" id="MGI:2442111"/>
    </source>
</evidence>
<evidence type="ECO:0007744" key="11">
    <source>
    </source>
</evidence>
<evidence type="ECO:0007744" key="12">
    <source>
    </source>
</evidence>
<name>PPM1K_MOUSE</name>
<feature type="transit peptide" description="Mitochondrion">
    <location>
        <begin position="1"/>
        <end position="29"/>
    </location>
</feature>
<feature type="chain" id="PRO_0000278209" description="Protein phosphatase Mn(2+)-dependent 1K">
    <location>
        <begin position="30"/>
        <end position="372"/>
    </location>
</feature>
<feature type="domain" description="PPM-type phosphatase" evidence="3">
    <location>
        <begin position="94"/>
        <end position="346"/>
    </location>
</feature>
<feature type="region of interest" description="Critical for association with the BCKDH complex" evidence="2">
    <location>
        <begin position="46"/>
        <end position="61"/>
    </location>
</feature>
<feature type="binding site" evidence="2">
    <location>
        <position position="127"/>
    </location>
    <ligand>
        <name>Mn(2+)</name>
        <dbReference type="ChEBI" id="CHEBI:29035"/>
        <label>1</label>
    </ligand>
</feature>
<feature type="binding site" evidence="2">
    <location>
        <position position="127"/>
    </location>
    <ligand>
        <name>Mn(2+)</name>
        <dbReference type="ChEBI" id="CHEBI:29035"/>
        <label>2</label>
    </ligand>
</feature>
<feature type="binding site" evidence="2">
    <location>
        <position position="128"/>
    </location>
    <ligand>
        <name>Mn(2+)</name>
        <dbReference type="ChEBI" id="CHEBI:29035"/>
        <label>1</label>
    </ligand>
</feature>
<feature type="binding site" evidence="2">
    <location>
        <position position="298"/>
    </location>
    <ligand>
        <name>Mn(2+)</name>
        <dbReference type="ChEBI" id="CHEBI:29035"/>
        <label>2</label>
    </ligand>
</feature>
<feature type="binding site" evidence="2">
    <location>
        <position position="337"/>
    </location>
    <ligand>
        <name>Mn(2+)</name>
        <dbReference type="ChEBI" id="CHEBI:29035"/>
        <label>2</label>
    </ligand>
</feature>
<feature type="modified residue" description="Phosphoserine" evidence="11 12">
    <location>
        <position position="248"/>
    </location>
</feature>
<reference key="1">
    <citation type="journal article" date="2007" name="Genes Dev.">
        <title>A novel mitochondrial matrix serine/threonine protein phosphatase regulates the mitochondria permeability transition pore and is essential for cellular survival and development.</title>
        <authorList>
            <person name="Lu G."/>
            <person name="Ren S."/>
            <person name="Korge P."/>
            <person name="Choi J."/>
            <person name="Dong Y."/>
            <person name="Weiss J."/>
            <person name="Koehler C."/>
            <person name="Chen J.-N."/>
            <person name="Wang Y."/>
        </authorList>
    </citation>
    <scope>NUCLEOTIDE SEQUENCE [MRNA]</scope>
    <scope>FUNCTION</scope>
    <scope>SUBCELLULAR LOCATION</scope>
    <scope>TISSUE SPECIFICITY</scope>
</reference>
<reference key="2">
    <citation type="journal article" date="2005" name="Science">
        <title>The transcriptional landscape of the mammalian genome.</title>
        <authorList>
            <person name="Carninci P."/>
            <person name="Kasukawa T."/>
            <person name="Katayama S."/>
            <person name="Gough J."/>
            <person name="Frith M.C."/>
            <person name="Maeda N."/>
            <person name="Oyama R."/>
            <person name="Ravasi T."/>
            <person name="Lenhard B."/>
            <person name="Wells C."/>
            <person name="Kodzius R."/>
            <person name="Shimokawa K."/>
            <person name="Bajic V.B."/>
            <person name="Brenner S.E."/>
            <person name="Batalov S."/>
            <person name="Forrest A.R."/>
            <person name="Zavolan M."/>
            <person name="Davis M.J."/>
            <person name="Wilming L.G."/>
            <person name="Aidinis V."/>
            <person name="Allen J.E."/>
            <person name="Ambesi-Impiombato A."/>
            <person name="Apweiler R."/>
            <person name="Aturaliya R.N."/>
            <person name="Bailey T.L."/>
            <person name="Bansal M."/>
            <person name="Baxter L."/>
            <person name="Beisel K.W."/>
            <person name="Bersano T."/>
            <person name="Bono H."/>
            <person name="Chalk A.M."/>
            <person name="Chiu K.P."/>
            <person name="Choudhary V."/>
            <person name="Christoffels A."/>
            <person name="Clutterbuck D.R."/>
            <person name="Crowe M.L."/>
            <person name="Dalla E."/>
            <person name="Dalrymple B.P."/>
            <person name="de Bono B."/>
            <person name="Della Gatta G."/>
            <person name="di Bernardo D."/>
            <person name="Down T."/>
            <person name="Engstrom P."/>
            <person name="Fagiolini M."/>
            <person name="Faulkner G."/>
            <person name="Fletcher C.F."/>
            <person name="Fukushima T."/>
            <person name="Furuno M."/>
            <person name="Futaki S."/>
            <person name="Gariboldi M."/>
            <person name="Georgii-Hemming P."/>
            <person name="Gingeras T.R."/>
            <person name="Gojobori T."/>
            <person name="Green R.E."/>
            <person name="Gustincich S."/>
            <person name="Harbers M."/>
            <person name="Hayashi Y."/>
            <person name="Hensch T.K."/>
            <person name="Hirokawa N."/>
            <person name="Hill D."/>
            <person name="Huminiecki L."/>
            <person name="Iacono M."/>
            <person name="Ikeo K."/>
            <person name="Iwama A."/>
            <person name="Ishikawa T."/>
            <person name="Jakt M."/>
            <person name="Kanapin A."/>
            <person name="Katoh M."/>
            <person name="Kawasawa Y."/>
            <person name="Kelso J."/>
            <person name="Kitamura H."/>
            <person name="Kitano H."/>
            <person name="Kollias G."/>
            <person name="Krishnan S.P."/>
            <person name="Kruger A."/>
            <person name="Kummerfeld S.K."/>
            <person name="Kurochkin I.V."/>
            <person name="Lareau L.F."/>
            <person name="Lazarevic D."/>
            <person name="Lipovich L."/>
            <person name="Liu J."/>
            <person name="Liuni S."/>
            <person name="McWilliam S."/>
            <person name="Madan Babu M."/>
            <person name="Madera M."/>
            <person name="Marchionni L."/>
            <person name="Matsuda H."/>
            <person name="Matsuzawa S."/>
            <person name="Miki H."/>
            <person name="Mignone F."/>
            <person name="Miyake S."/>
            <person name="Morris K."/>
            <person name="Mottagui-Tabar S."/>
            <person name="Mulder N."/>
            <person name="Nakano N."/>
            <person name="Nakauchi H."/>
            <person name="Ng P."/>
            <person name="Nilsson R."/>
            <person name="Nishiguchi S."/>
            <person name="Nishikawa S."/>
            <person name="Nori F."/>
            <person name="Ohara O."/>
            <person name="Okazaki Y."/>
            <person name="Orlando V."/>
            <person name="Pang K.C."/>
            <person name="Pavan W.J."/>
            <person name="Pavesi G."/>
            <person name="Pesole G."/>
            <person name="Petrovsky N."/>
            <person name="Piazza S."/>
            <person name="Reed J."/>
            <person name="Reid J.F."/>
            <person name="Ring B.Z."/>
            <person name="Ringwald M."/>
            <person name="Rost B."/>
            <person name="Ruan Y."/>
            <person name="Salzberg S.L."/>
            <person name="Sandelin A."/>
            <person name="Schneider C."/>
            <person name="Schoenbach C."/>
            <person name="Sekiguchi K."/>
            <person name="Semple C.A."/>
            <person name="Seno S."/>
            <person name="Sessa L."/>
            <person name="Sheng Y."/>
            <person name="Shibata Y."/>
            <person name="Shimada H."/>
            <person name="Shimada K."/>
            <person name="Silva D."/>
            <person name="Sinclair B."/>
            <person name="Sperling S."/>
            <person name="Stupka E."/>
            <person name="Sugiura K."/>
            <person name="Sultana R."/>
            <person name="Takenaka Y."/>
            <person name="Taki K."/>
            <person name="Tammoja K."/>
            <person name="Tan S.L."/>
            <person name="Tang S."/>
            <person name="Taylor M.S."/>
            <person name="Tegner J."/>
            <person name="Teichmann S.A."/>
            <person name="Ueda H.R."/>
            <person name="van Nimwegen E."/>
            <person name="Verardo R."/>
            <person name="Wei C.L."/>
            <person name="Yagi K."/>
            <person name="Yamanishi H."/>
            <person name="Zabarovsky E."/>
            <person name="Zhu S."/>
            <person name="Zimmer A."/>
            <person name="Hide W."/>
            <person name="Bult C."/>
            <person name="Grimmond S.M."/>
            <person name="Teasdale R.D."/>
            <person name="Liu E.T."/>
            <person name="Brusic V."/>
            <person name="Quackenbush J."/>
            <person name="Wahlestedt C."/>
            <person name="Mattick J.S."/>
            <person name="Hume D.A."/>
            <person name="Kai C."/>
            <person name="Sasaki D."/>
            <person name="Tomaru Y."/>
            <person name="Fukuda S."/>
            <person name="Kanamori-Katayama M."/>
            <person name="Suzuki M."/>
            <person name="Aoki J."/>
            <person name="Arakawa T."/>
            <person name="Iida J."/>
            <person name="Imamura K."/>
            <person name="Itoh M."/>
            <person name="Kato T."/>
            <person name="Kawaji H."/>
            <person name="Kawagashira N."/>
            <person name="Kawashima T."/>
            <person name="Kojima M."/>
            <person name="Kondo S."/>
            <person name="Konno H."/>
            <person name="Nakano K."/>
            <person name="Ninomiya N."/>
            <person name="Nishio T."/>
            <person name="Okada M."/>
            <person name="Plessy C."/>
            <person name="Shibata K."/>
            <person name="Shiraki T."/>
            <person name="Suzuki S."/>
            <person name="Tagami M."/>
            <person name="Waki K."/>
            <person name="Watahiki A."/>
            <person name="Okamura-Oho Y."/>
            <person name="Suzuki H."/>
            <person name="Kawai J."/>
            <person name="Hayashizaki Y."/>
        </authorList>
    </citation>
    <scope>NUCLEOTIDE SEQUENCE [LARGE SCALE MRNA]</scope>
    <source>
        <strain>C57BL/6J</strain>
        <tissue>Retina</tissue>
    </source>
</reference>
<reference key="3">
    <citation type="journal article" date="2004" name="Genome Res.">
        <title>The status, quality, and expansion of the NIH full-length cDNA project: the Mammalian Gene Collection (MGC).</title>
        <authorList>
            <consortium name="The MGC Project Team"/>
        </authorList>
    </citation>
    <scope>NUCLEOTIDE SEQUENCE [LARGE SCALE MRNA]</scope>
    <source>
        <strain>C57BL/6J</strain>
        <tissue>Head</tissue>
    </source>
</reference>
<reference key="4">
    <citation type="journal article" date="2007" name="Biochem. Biophys. Res. Commun.">
        <title>Identification of a novel PP2C-type mitochondrial phosphatase.</title>
        <authorList>
            <person name="Joshi M.A."/>
            <person name="Jeoung N.H."/>
            <person name="Popov K.M."/>
            <person name="Harris R.A."/>
        </authorList>
    </citation>
    <scope>TISSUE SPECIFICITY</scope>
</reference>
<reference key="5">
    <citation type="journal article" date="2007" name="Proc. Natl. Acad. Sci. U.S.A.">
        <title>Large-scale phosphorylation analysis of mouse liver.</title>
        <authorList>
            <person name="Villen J."/>
            <person name="Beausoleil S.A."/>
            <person name="Gerber S.A."/>
            <person name="Gygi S.P."/>
        </authorList>
    </citation>
    <scope>PHOSPHORYLATION [LARGE SCALE ANALYSIS] AT SER-248</scope>
    <scope>IDENTIFICATION BY MASS SPECTROMETRY [LARGE SCALE ANALYSIS]</scope>
    <source>
        <tissue>Liver</tissue>
    </source>
</reference>
<reference key="6">
    <citation type="journal article" date="2009" name="J. Clin. Invest.">
        <title>Protein phosphatase 2Cm is a critical regulator of branched-chain amino acid catabolism in mice and cultured cells.</title>
        <authorList>
            <person name="Lu G."/>
            <person name="Sun H."/>
            <person name="She P."/>
            <person name="Youn J.Y."/>
            <person name="Warburton S."/>
            <person name="Ping P."/>
            <person name="Vondriska T.M."/>
            <person name="Cai H."/>
            <person name="Lynch C.J."/>
            <person name="Wang Y."/>
        </authorList>
    </citation>
    <scope>FUNCTION</scope>
    <scope>CATALYTIC ACTIVITY</scope>
    <scope>TISSUE SPECIFICITY</scope>
    <scope>DISRUPTION PHENOTYPE</scope>
</reference>
<reference key="7">
    <citation type="journal article" date="2010" name="Cell">
        <title>A tissue-specific atlas of mouse protein phosphorylation and expression.</title>
        <authorList>
            <person name="Huttlin E.L."/>
            <person name="Jedrychowski M.P."/>
            <person name="Elias J.E."/>
            <person name="Goswami T."/>
            <person name="Rad R."/>
            <person name="Beausoleil S.A."/>
            <person name="Villen J."/>
            <person name="Haas W."/>
            <person name="Sowa M.E."/>
            <person name="Gygi S.P."/>
        </authorList>
    </citation>
    <scope>PHOSPHORYLATION [LARGE SCALE ANALYSIS] AT SER-248</scope>
    <scope>IDENTIFICATION BY MASS SPECTROMETRY [LARGE SCALE ANALYSIS]</scope>
    <source>
        <tissue>Brain</tissue>
        <tissue>Brown adipose tissue</tissue>
        <tissue>Heart</tissue>
        <tissue>Kidney</tissue>
        <tissue>Liver</tissue>
        <tissue>Lung</tissue>
        <tissue>Pancreas</tissue>
        <tissue>Spleen</tissue>
        <tissue>Testis</tissue>
    </source>
</reference>
<reference key="8">
    <citation type="journal article" date="2012" name="J. Biol. Chem.">
        <title>Tissue-specific and nutrient regulation of the branched-chain alpha-keto acid dehydrogenase phosphatase, protein phosphatase 2Cm (PP2Cm).</title>
        <authorList>
            <person name="Zhou M."/>
            <person name="Lu G."/>
            <person name="Gao C."/>
            <person name="Wang Y."/>
            <person name="Sun H."/>
        </authorList>
    </citation>
    <scope>TISSUE SPECIFICITY</scope>
    <scope>DEVELOPMENTAL STAGE</scope>
    <scope>INDUCTION</scope>
</reference>
<sequence>MLSAAFITLLRSGGNQVKKRVLLSSILLQDHRQATPACYFSTSEARCSRFDPDGSGQPATWDNFGIWDNRIDEPILLPPSIKYGKPIPKISLENVGCASLIGKRKENEDRFGFAQLTEEVLYFAVYDGHGGPAAADFCHTHMEKCVMDLLPREKDLETVLTLAFLEIDKAFASYAHLSADASLLTSGTTATVALLRDGVELVVASVGDSRALLCRKGKPMKLTTDHTPERKDEKERIKKFGGFVAWNSLGQPHVNGRLAMTRSIGDLDLKASGVIAEPETTRIKLYHADDSFLVLTTDGINFMVNSQEICDFVNQCHDPKEAAHSVTEQAIQYGTEDNSTAVVVPFGAWGKYKNSEITFSFSRSFASSGRWA</sequence>
<dbReference type="EC" id="3.1.3.16" evidence="2"/>
<dbReference type="EC" id="3.1.3.52" evidence="2"/>
<dbReference type="EMBL" id="AK044610">
    <property type="protein sequence ID" value="BAC32001.1"/>
    <property type="molecule type" value="mRNA"/>
</dbReference>
<dbReference type="EMBL" id="BC092238">
    <property type="protein sequence ID" value="AAH92238.1"/>
    <property type="molecule type" value="mRNA"/>
</dbReference>
<dbReference type="CCDS" id="CCDS20183.1"/>
<dbReference type="RefSeq" id="NP_780732.1">
    <property type="nucleotide sequence ID" value="NM_175523.5"/>
</dbReference>
<dbReference type="SMR" id="Q8BXN7"/>
<dbReference type="FunCoup" id="Q8BXN7">
    <property type="interactions" value="612"/>
</dbReference>
<dbReference type="STRING" id="10090.ENSMUSP00000041395"/>
<dbReference type="iPTMnet" id="Q8BXN7"/>
<dbReference type="PhosphoSitePlus" id="Q8BXN7"/>
<dbReference type="jPOST" id="Q8BXN7"/>
<dbReference type="PaxDb" id="10090-ENSMUSP00000041395"/>
<dbReference type="ProteomicsDB" id="291715"/>
<dbReference type="Antibodypedia" id="14616">
    <property type="antibodies" value="156 antibodies from 28 providers"/>
</dbReference>
<dbReference type="DNASU" id="243382"/>
<dbReference type="Ensembl" id="ENSMUST00000042766.6">
    <property type="protein sequence ID" value="ENSMUSP00000041395.4"/>
    <property type="gene ID" value="ENSMUSG00000037826.6"/>
</dbReference>
<dbReference type="GeneID" id="243382"/>
<dbReference type="KEGG" id="mmu:243382"/>
<dbReference type="UCSC" id="uc009cch.1">
    <property type="organism name" value="mouse"/>
</dbReference>
<dbReference type="AGR" id="MGI:2442111"/>
<dbReference type="CTD" id="152926"/>
<dbReference type="MGI" id="MGI:2442111">
    <property type="gene designation" value="Ppm1k"/>
</dbReference>
<dbReference type="VEuPathDB" id="HostDB:ENSMUSG00000037826"/>
<dbReference type="eggNOG" id="KOG0698">
    <property type="taxonomic scope" value="Eukaryota"/>
</dbReference>
<dbReference type="GeneTree" id="ENSGT00940000156633"/>
<dbReference type="HOGENOM" id="CLU_013173_1_3_1"/>
<dbReference type="InParanoid" id="Q8BXN7"/>
<dbReference type="OMA" id="CHTHMKK"/>
<dbReference type="OrthoDB" id="416093at2759"/>
<dbReference type="PhylomeDB" id="Q8BXN7"/>
<dbReference type="TreeFam" id="TF354344"/>
<dbReference type="Reactome" id="R-MMU-70895">
    <property type="pathway name" value="Branched-chain amino acid catabolism"/>
</dbReference>
<dbReference type="BioGRID-ORCS" id="243382">
    <property type="hits" value="2 hits in 76 CRISPR screens"/>
</dbReference>
<dbReference type="ChiTaRS" id="Ppm1k">
    <property type="organism name" value="mouse"/>
</dbReference>
<dbReference type="PRO" id="PR:Q8BXN7"/>
<dbReference type="Proteomes" id="UP000000589">
    <property type="component" value="Chromosome 6"/>
</dbReference>
<dbReference type="RNAct" id="Q8BXN7">
    <property type="molecule type" value="protein"/>
</dbReference>
<dbReference type="Bgee" id="ENSMUSG00000037826">
    <property type="expression patterns" value="Expressed in retrosplenial region and 219 other cell types or tissues"/>
</dbReference>
<dbReference type="ExpressionAtlas" id="Q8BXN7">
    <property type="expression patterns" value="baseline and differential"/>
</dbReference>
<dbReference type="GO" id="GO:0005759">
    <property type="term" value="C:mitochondrial matrix"/>
    <property type="evidence" value="ECO:0000314"/>
    <property type="project" value="UniProtKB"/>
</dbReference>
<dbReference type="GO" id="GO:0005739">
    <property type="term" value="C:mitochondrion"/>
    <property type="evidence" value="ECO:0007005"/>
    <property type="project" value="MGI"/>
</dbReference>
<dbReference type="GO" id="GO:0047385">
    <property type="term" value="F:[3-methyl-2-oxobutanoate dehydrogenase (lipoamide)]-phosphatase activity"/>
    <property type="evidence" value="ECO:0007669"/>
    <property type="project" value="RHEA"/>
</dbReference>
<dbReference type="GO" id="GO:0030145">
    <property type="term" value="F:manganese ion binding"/>
    <property type="evidence" value="ECO:0007669"/>
    <property type="project" value="Ensembl"/>
</dbReference>
<dbReference type="GO" id="GO:0004722">
    <property type="term" value="F:protein serine/threonine phosphatase activity"/>
    <property type="evidence" value="ECO:0007669"/>
    <property type="project" value="UniProtKB-EC"/>
</dbReference>
<dbReference type="GO" id="GO:0009083">
    <property type="term" value="P:branched-chain amino acid catabolic process"/>
    <property type="evidence" value="ECO:0007669"/>
    <property type="project" value="Ensembl"/>
</dbReference>
<dbReference type="GO" id="GO:1902108">
    <property type="term" value="P:regulation of mitochondrial membrane permeability involved in apoptotic process"/>
    <property type="evidence" value="ECO:0000315"/>
    <property type="project" value="UniProtKB"/>
</dbReference>
<dbReference type="CDD" id="cd00143">
    <property type="entry name" value="PP2Cc"/>
    <property type="match status" value="1"/>
</dbReference>
<dbReference type="FunFam" id="3.60.40.10:FF:000033">
    <property type="entry name" value="Protein phosphatase 1K, mitochondrial"/>
    <property type="match status" value="1"/>
</dbReference>
<dbReference type="Gene3D" id="3.60.40.10">
    <property type="entry name" value="PPM-type phosphatase domain"/>
    <property type="match status" value="1"/>
</dbReference>
<dbReference type="InterPro" id="IPR015655">
    <property type="entry name" value="PP2C"/>
</dbReference>
<dbReference type="InterPro" id="IPR000222">
    <property type="entry name" value="PP2C_BS"/>
</dbReference>
<dbReference type="InterPro" id="IPR036457">
    <property type="entry name" value="PPM-type-like_dom_sf"/>
</dbReference>
<dbReference type="InterPro" id="IPR001932">
    <property type="entry name" value="PPM-type_phosphatase-like_dom"/>
</dbReference>
<dbReference type="PANTHER" id="PTHR47992">
    <property type="entry name" value="PROTEIN PHOSPHATASE"/>
    <property type="match status" value="1"/>
</dbReference>
<dbReference type="Pfam" id="PF00481">
    <property type="entry name" value="PP2C"/>
    <property type="match status" value="1"/>
</dbReference>
<dbReference type="SMART" id="SM00331">
    <property type="entry name" value="PP2C_SIG"/>
    <property type="match status" value="1"/>
</dbReference>
<dbReference type="SMART" id="SM00332">
    <property type="entry name" value="PP2Cc"/>
    <property type="match status" value="1"/>
</dbReference>
<dbReference type="SUPFAM" id="SSF81606">
    <property type="entry name" value="PP2C-like"/>
    <property type="match status" value="1"/>
</dbReference>
<dbReference type="PROSITE" id="PS01032">
    <property type="entry name" value="PPM_1"/>
    <property type="match status" value="1"/>
</dbReference>
<dbReference type="PROSITE" id="PS51746">
    <property type="entry name" value="PPM_2"/>
    <property type="match status" value="1"/>
</dbReference>
<proteinExistence type="evidence at protein level"/>
<protein>
    <recommendedName>
        <fullName>Protein phosphatase Mn(2+)-dependent 1K</fullName>
    </recommendedName>
    <alternativeName>
        <fullName evidence="2">Branched-chain alpha-ketoacid dehydrogenase phosphatase</fullName>
        <shortName evidence="2">BCKDH</shortName>
        <shortName evidence="2">BDP</shortName>
        <ecNumber evidence="2">3.1.3.16</ecNumber>
    </alternativeName>
    <alternativeName>
        <fullName evidence="2">Protein phosphatase 2C family member</fullName>
    </alternativeName>
    <alternativeName>
        <fullName>Protein phosphatase 2C isoform kappa</fullName>
        <shortName>PP2C-kappa</shortName>
    </alternativeName>
    <alternativeName>
        <fullName>[3-methyl-2-oxobutanoate dehydrogenase (2-methylpropanoyl-transferring)]-phosphatase</fullName>
        <ecNumber evidence="2">3.1.3.52</ecNumber>
    </alternativeName>
</protein>
<keyword id="KW-0378">Hydrolase</keyword>
<keyword id="KW-0464">Manganese</keyword>
<keyword id="KW-0479">Metal-binding</keyword>
<keyword id="KW-0496">Mitochondrion</keyword>
<keyword id="KW-0597">Phosphoprotein</keyword>
<keyword id="KW-0904">Protein phosphatase</keyword>
<keyword id="KW-1185">Reference proteome</keyword>
<keyword id="KW-0809">Transit peptide</keyword>
<accession>Q8BXN7</accession>